<organism>
    <name type="scientific">Aquifex aeolicus (strain VF5)</name>
    <dbReference type="NCBI Taxonomy" id="224324"/>
    <lineage>
        <taxon>Bacteria</taxon>
        <taxon>Pseudomonadati</taxon>
        <taxon>Aquificota</taxon>
        <taxon>Aquificia</taxon>
        <taxon>Aquificales</taxon>
        <taxon>Aquificaceae</taxon>
        <taxon>Aquifex</taxon>
    </lineage>
</organism>
<comment type="function">
    <text evidence="1">NDH-1 shuttles electrons from NADH, via FMN and iron-sulfur (Fe-S) centers, to quinones in the respiratory chain. The immediate electron acceptor for the enzyme in this species is believed to be ubiquinone. Couples the redox reaction to proton translocation (for every two electrons transferred, four hydrogen ions are translocated across the cytoplasmic membrane), and thus conserves the redox energy in a proton gradient.</text>
</comment>
<comment type="catalytic activity">
    <reaction evidence="1">
        <text>a quinone + NADH + 5 H(+)(in) = a quinol + NAD(+) + 4 H(+)(out)</text>
        <dbReference type="Rhea" id="RHEA:57888"/>
        <dbReference type="ChEBI" id="CHEBI:15378"/>
        <dbReference type="ChEBI" id="CHEBI:24646"/>
        <dbReference type="ChEBI" id="CHEBI:57540"/>
        <dbReference type="ChEBI" id="CHEBI:57945"/>
        <dbReference type="ChEBI" id="CHEBI:132124"/>
    </reaction>
</comment>
<comment type="subunit">
    <text evidence="1">NDH-1 is composed of 14 different subunits. Subunits NuoA, H, J, K, L, M, N constitute the membrane sector of the complex.</text>
</comment>
<comment type="subcellular location">
    <subcellularLocation>
        <location evidence="1">Cell inner membrane</location>
        <topology evidence="1">Multi-pass membrane protein</topology>
    </subcellularLocation>
</comment>
<comment type="similarity">
    <text evidence="1">Belongs to the complex I subunit 2 family.</text>
</comment>
<reference key="1">
    <citation type="journal article" date="1998" name="Nature">
        <title>The complete genome of the hyperthermophilic bacterium Aquifex aeolicus.</title>
        <authorList>
            <person name="Deckert G."/>
            <person name="Warren P.V."/>
            <person name="Gaasterland T."/>
            <person name="Young W.G."/>
            <person name="Lenox A.L."/>
            <person name="Graham D.E."/>
            <person name="Overbeek R."/>
            <person name="Snead M.A."/>
            <person name="Keller M."/>
            <person name="Aujay M."/>
            <person name="Huber R."/>
            <person name="Feldman R.A."/>
            <person name="Short J.M."/>
            <person name="Olsen G.J."/>
            <person name="Swanson R.V."/>
        </authorList>
    </citation>
    <scope>NUCLEOTIDE SEQUENCE [LARGE SCALE GENOMIC DNA]</scope>
    <source>
        <strain>VF5</strain>
    </source>
</reference>
<evidence type="ECO:0000255" key="1">
    <source>
        <dbReference type="HAMAP-Rule" id="MF_00445"/>
    </source>
</evidence>
<proteinExistence type="inferred from homology"/>
<dbReference type="EC" id="7.1.1.-" evidence="1"/>
<dbReference type="EMBL" id="AE000657">
    <property type="protein sequence ID" value="AAC07305.1"/>
    <property type="molecule type" value="Genomic_DNA"/>
</dbReference>
<dbReference type="PIR" id="C70414">
    <property type="entry name" value="C70414"/>
</dbReference>
<dbReference type="RefSeq" id="NP_213906.1">
    <property type="nucleotide sequence ID" value="NC_000918.1"/>
</dbReference>
<dbReference type="RefSeq" id="WP_010880844.1">
    <property type="nucleotide sequence ID" value="NC_000918.1"/>
</dbReference>
<dbReference type="SMR" id="O67342"/>
<dbReference type="FunCoup" id="O67342">
    <property type="interactions" value="132"/>
</dbReference>
<dbReference type="STRING" id="224324.aq_1322"/>
<dbReference type="EnsemblBacteria" id="AAC07305">
    <property type="protein sequence ID" value="AAC07305"/>
    <property type="gene ID" value="aq_1322"/>
</dbReference>
<dbReference type="KEGG" id="aae:aq_1322"/>
<dbReference type="PATRIC" id="fig|224324.8.peg.1030"/>
<dbReference type="eggNOG" id="COG1007">
    <property type="taxonomic scope" value="Bacteria"/>
</dbReference>
<dbReference type="HOGENOM" id="CLU_007100_1_4_0"/>
<dbReference type="InParanoid" id="O67342"/>
<dbReference type="OrthoDB" id="9807568at2"/>
<dbReference type="Proteomes" id="UP000000798">
    <property type="component" value="Chromosome"/>
</dbReference>
<dbReference type="GO" id="GO:0005886">
    <property type="term" value="C:plasma membrane"/>
    <property type="evidence" value="ECO:0007669"/>
    <property type="project" value="UniProtKB-SubCell"/>
</dbReference>
<dbReference type="GO" id="GO:0008137">
    <property type="term" value="F:NADH dehydrogenase (ubiquinone) activity"/>
    <property type="evidence" value="ECO:0007669"/>
    <property type="project" value="InterPro"/>
</dbReference>
<dbReference type="GO" id="GO:0050136">
    <property type="term" value="F:NADH:ubiquinone reductase (non-electrogenic) activity"/>
    <property type="evidence" value="ECO:0007669"/>
    <property type="project" value="UniProtKB-UniRule"/>
</dbReference>
<dbReference type="GO" id="GO:0048038">
    <property type="term" value="F:quinone binding"/>
    <property type="evidence" value="ECO:0007669"/>
    <property type="project" value="UniProtKB-KW"/>
</dbReference>
<dbReference type="GO" id="GO:0042773">
    <property type="term" value="P:ATP synthesis coupled electron transport"/>
    <property type="evidence" value="ECO:0007669"/>
    <property type="project" value="InterPro"/>
</dbReference>
<dbReference type="HAMAP" id="MF_00445">
    <property type="entry name" value="NDH1_NuoN_1"/>
    <property type="match status" value="1"/>
</dbReference>
<dbReference type="InterPro" id="IPR010096">
    <property type="entry name" value="NADH-Q_OxRdtase_suN/2"/>
</dbReference>
<dbReference type="InterPro" id="IPR001750">
    <property type="entry name" value="ND/Mrp_TM"/>
</dbReference>
<dbReference type="NCBIfam" id="TIGR01770">
    <property type="entry name" value="NDH_I_N"/>
    <property type="match status" value="1"/>
</dbReference>
<dbReference type="PANTHER" id="PTHR22773">
    <property type="entry name" value="NADH DEHYDROGENASE"/>
    <property type="match status" value="1"/>
</dbReference>
<dbReference type="Pfam" id="PF00361">
    <property type="entry name" value="Proton_antipo_M"/>
    <property type="match status" value="1"/>
</dbReference>
<gene>
    <name evidence="1" type="primary">nuoN1</name>
    <name type="ordered locus">aq_1322</name>
</gene>
<keyword id="KW-0997">Cell inner membrane</keyword>
<keyword id="KW-1003">Cell membrane</keyword>
<keyword id="KW-0472">Membrane</keyword>
<keyword id="KW-0520">NAD</keyword>
<keyword id="KW-0874">Quinone</keyword>
<keyword id="KW-1185">Reference proteome</keyword>
<keyword id="KW-1278">Translocase</keyword>
<keyword id="KW-0812">Transmembrane</keyword>
<keyword id="KW-1133">Transmembrane helix</keyword>
<keyword id="KW-0813">Transport</keyword>
<keyword id="KW-0830">Ubiquinone</keyword>
<sequence length="464" mass="51286">MNWNAILPEAILAIGILTVFILELFLERKHYKFLSVLAFIFVVLSGYSIFFVNYPAKLFFDGFSVDALNLIGKLFILAVTGFVLLSSYDYFSKKNSQYGELPYLYLIATLGLMVMISSDNLAIIFTGLELASITMYILVGLFRREYLSKEGAFKYLVIGTTGTSMYALGSALVYASSGSMVLSPVKEENTLFALGVILIISALALKVSAVPFHFWTPDAYEGAPTPTTAYLSTVPKIGMYFLFVKLTMYLFSAFPDWKYVVMLLAVLSMFYGNIVAYAQKSVKRLLAYSSIAHAGYFLTALTAVDKHLFSALLFYVFVYALATVGAFTVLAILEKKEGWTHHFLDFKGLKEENPVLASMLALFLFALIGIPPAAVFLGKLGIFFGLVKTDMFALGILFAIASLISAGYYLKVIVYMFLYSGEVRHGQTTVSAGEAFTVLGTAFLVIFFGLFPHVVLDFILRALS</sequence>
<accession>O67342</accession>
<protein>
    <recommendedName>
        <fullName evidence="1">NADH-quinone oxidoreductase subunit N 1</fullName>
        <ecNumber evidence="1">7.1.1.-</ecNumber>
    </recommendedName>
    <alternativeName>
        <fullName evidence="1">NADH dehydrogenase I subunit N 1</fullName>
    </alternativeName>
    <alternativeName>
        <fullName evidence="1">NDH-1 subunit N 1</fullName>
    </alternativeName>
</protein>
<feature type="chain" id="PRO_0000391098" description="NADH-quinone oxidoreductase subunit N 1">
    <location>
        <begin position="1"/>
        <end position="464"/>
    </location>
</feature>
<feature type="transmembrane region" description="Helical" evidence="1">
    <location>
        <begin position="6"/>
        <end position="26"/>
    </location>
</feature>
<feature type="transmembrane region" description="Helical" evidence="1">
    <location>
        <begin position="33"/>
        <end position="53"/>
    </location>
</feature>
<feature type="transmembrane region" description="Helical" evidence="1">
    <location>
        <begin position="65"/>
        <end position="85"/>
    </location>
</feature>
<feature type="transmembrane region" description="Helical" evidence="1">
    <location>
        <begin position="98"/>
        <end position="118"/>
    </location>
</feature>
<feature type="transmembrane region" description="Helical" evidence="1">
    <location>
        <begin position="122"/>
        <end position="142"/>
    </location>
</feature>
<feature type="transmembrane region" description="Helical" evidence="1">
    <location>
        <begin position="155"/>
        <end position="175"/>
    </location>
</feature>
<feature type="transmembrane region" description="Helical" evidence="1">
    <location>
        <begin position="192"/>
        <end position="212"/>
    </location>
</feature>
<feature type="transmembrane region" description="Helical" evidence="1">
    <location>
        <begin position="237"/>
        <end position="257"/>
    </location>
</feature>
<feature type="transmembrane region" description="Helical" evidence="1">
    <location>
        <begin position="259"/>
        <end position="279"/>
    </location>
</feature>
<feature type="transmembrane region" description="Helical" evidence="1">
    <location>
        <begin position="285"/>
        <end position="305"/>
    </location>
</feature>
<feature type="transmembrane region" description="Helical" evidence="1">
    <location>
        <begin position="312"/>
        <end position="332"/>
    </location>
</feature>
<feature type="transmembrane region" description="Helical" evidence="1">
    <location>
        <begin position="356"/>
        <end position="376"/>
    </location>
</feature>
<feature type="transmembrane region" description="Helical" evidence="1">
    <location>
        <begin position="401"/>
        <end position="421"/>
    </location>
</feature>
<feature type="transmembrane region" description="Helical" evidence="1">
    <location>
        <begin position="436"/>
        <end position="456"/>
    </location>
</feature>
<name>NUON1_AQUAE</name>